<accession>Q9ZV93</accession>
<gene>
    <name type="ordered locus">At1g78750</name>
    <name type="ORF">F9K20.21</name>
</gene>
<sequence length="458" mass="52428">MDGAGEKRVRAKGSREVDWISNLPETLLCQVLFYLPTKDVVKSSVLSSRWRNLWKYVPGFNLSYCDFHVRNTFSYDHNTFLRFVDSFMGFNSQSCLQSFRLEYDSSGYGEPKLALIRRWINSVVSRKVKYLGVLDDSCDNYEFEMPPTLYTCETLVYLTLDGLSLASPKFVSLPSLKELHLSIVKFADHMALETLISQCPVLENLNINRSFCDDFEFTCVRSQSLLSFTHVADTDEMLNEDLVVAIDAPKLKYLRLSDHRIASFILNDLASLVEADIDTVFNLICKKMFNPNDLNKRNMIRDFLVGISSIKTLIIASSTLEVIYDYSRCEPLPLFRNLSSLRVDFYGYKWEMLPIFLESCPNLKSLVVGSANYREKEGINILSVPRGFLSSLEYVKIERPLKGEAMEMKLVSYLLENSTILKKLTLCLDDSIKKEESVILKELNTIPRLSSACQVVIL</sequence>
<proteinExistence type="evidence at transcript level"/>
<feature type="chain" id="PRO_0000283103" description="F-box/FBD/LRR-repeat protein At1g78750">
    <location>
        <begin position="1"/>
        <end position="458"/>
    </location>
</feature>
<feature type="domain" description="F-box" evidence="1">
    <location>
        <begin position="17"/>
        <end position="67"/>
    </location>
</feature>
<feature type="repeat" description="LRR 1">
    <location>
        <begin position="152"/>
        <end position="183"/>
    </location>
</feature>
<feature type="repeat" description="LRR 2">
    <location>
        <begin position="184"/>
        <end position="209"/>
    </location>
</feature>
<feature type="repeat" description="LRR 3">
    <location>
        <begin position="231"/>
        <end position="258"/>
    </location>
</feature>
<feature type="repeat" description="LRR 4">
    <location>
        <begin position="302"/>
        <end position="327"/>
    </location>
</feature>
<feature type="repeat" description="LRR 5">
    <location>
        <begin position="345"/>
        <end position="370"/>
    </location>
</feature>
<feature type="domain" description="FBD">
    <location>
        <begin position="376"/>
        <end position="428"/>
    </location>
</feature>
<protein>
    <recommendedName>
        <fullName>F-box/FBD/LRR-repeat protein At1g78750</fullName>
    </recommendedName>
</protein>
<name>FDL10_ARATH</name>
<dbReference type="EMBL" id="AC005679">
    <property type="protein sequence ID" value="AAC83035.1"/>
    <property type="molecule type" value="Genomic_DNA"/>
</dbReference>
<dbReference type="EMBL" id="CP002684">
    <property type="protein sequence ID" value="AEE36146.1"/>
    <property type="molecule type" value="Genomic_DNA"/>
</dbReference>
<dbReference type="EMBL" id="CP002684">
    <property type="protein sequence ID" value="ANM59845.1"/>
    <property type="molecule type" value="Genomic_DNA"/>
</dbReference>
<dbReference type="PIR" id="E96816">
    <property type="entry name" value="E96816"/>
</dbReference>
<dbReference type="RefSeq" id="NP_001319406.1">
    <property type="nucleotide sequence ID" value="NM_001334843.1"/>
</dbReference>
<dbReference type="RefSeq" id="NP_177996.1">
    <property type="nucleotide sequence ID" value="NM_106522.2"/>
</dbReference>
<dbReference type="FunCoup" id="Q9ZV93">
    <property type="interactions" value="4"/>
</dbReference>
<dbReference type="PaxDb" id="3702-AT1G78750.1"/>
<dbReference type="EnsemblPlants" id="AT1G78750.1">
    <property type="protein sequence ID" value="AT1G78750.1"/>
    <property type="gene ID" value="AT1G78750"/>
</dbReference>
<dbReference type="EnsemblPlants" id="AT1G78750.2">
    <property type="protein sequence ID" value="AT1G78750.2"/>
    <property type="gene ID" value="AT1G78750"/>
</dbReference>
<dbReference type="GeneID" id="844211"/>
<dbReference type="Gramene" id="AT1G78750.1">
    <property type="protein sequence ID" value="AT1G78750.1"/>
    <property type="gene ID" value="AT1G78750"/>
</dbReference>
<dbReference type="Gramene" id="AT1G78750.2">
    <property type="protein sequence ID" value="AT1G78750.2"/>
    <property type="gene ID" value="AT1G78750"/>
</dbReference>
<dbReference type="KEGG" id="ath:AT1G78750"/>
<dbReference type="Araport" id="AT1G78750"/>
<dbReference type="TAIR" id="AT1G78750"/>
<dbReference type="eggNOG" id="ENOG502SVTR">
    <property type="taxonomic scope" value="Eukaryota"/>
</dbReference>
<dbReference type="HOGENOM" id="CLU_010721_1_3_1"/>
<dbReference type="InParanoid" id="Q9ZV93"/>
<dbReference type="OMA" id="REHIAIP"/>
<dbReference type="PhylomeDB" id="Q9ZV93"/>
<dbReference type="PRO" id="PR:Q9ZV93"/>
<dbReference type="Proteomes" id="UP000006548">
    <property type="component" value="Chromosome 1"/>
</dbReference>
<dbReference type="ExpressionAtlas" id="Q9ZV93">
    <property type="expression patterns" value="baseline and differential"/>
</dbReference>
<dbReference type="CDD" id="cd22160">
    <property type="entry name" value="F-box_AtFBL13-like"/>
    <property type="match status" value="1"/>
</dbReference>
<dbReference type="Gene3D" id="1.20.1280.50">
    <property type="match status" value="1"/>
</dbReference>
<dbReference type="Gene3D" id="3.80.10.10">
    <property type="entry name" value="Ribonuclease Inhibitor"/>
    <property type="match status" value="1"/>
</dbReference>
<dbReference type="InterPro" id="IPR036047">
    <property type="entry name" value="F-box-like_dom_sf"/>
</dbReference>
<dbReference type="InterPro" id="IPR053781">
    <property type="entry name" value="F-box_AtFBL13-like"/>
</dbReference>
<dbReference type="InterPro" id="IPR001810">
    <property type="entry name" value="F-box_dom"/>
</dbReference>
<dbReference type="InterPro" id="IPR006566">
    <property type="entry name" value="FBD"/>
</dbReference>
<dbReference type="InterPro" id="IPR050232">
    <property type="entry name" value="FBL13/AtMIF1-like"/>
</dbReference>
<dbReference type="InterPro" id="IPR032675">
    <property type="entry name" value="LRR_dom_sf"/>
</dbReference>
<dbReference type="InterPro" id="IPR055411">
    <property type="entry name" value="LRR_FXL15/At3g58940/PEG3-like"/>
</dbReference>
<dbReference type="PANTHER" id="PTHR31900">
    <property type="entry name" value="F-BOX/RNI SUPERFAMILY PROTEIN-RELATED"/>
    <property type="match status" value="1"/>
</dbReference>
<dbReference type="PANTHER" id="PTHR31900:SF33">
    <property type="entry name" value="PROTEIN WITH RNI-LIKE_FBD-LIKE DOMAIN"/>
    <property type="match status" value="1"/>
</dbReference>
<dbReference type="Pfam" id="PF00646">
    <property type="entry name" value="F-box"/>
    <property type="match status" value="1"/>
</dbReference>
<dbReference type="Pfam" id="PF08387">
    <property type="entry name" value="FBD"/>
    <property type="match status" value="1"/>
</dbReference>
<dbReference type="Pfam" id="PF24758">
    <property type="entry name" value="LRR_At5g56370"/>
    <property type="match status" value="1"/>
</dbReference>
<dbReference type="SMART" id="SM00579">
    <property type="entry name" value="FBD"/>
    <property type="match status" value="1"/>
</dbReference>
<dbReference type="SMART" id="SM00256">
    <property type="entry name" value="FBOX"/>
    <property type="match status" value="1"/>
</dbReference>
<dbReference type="SUPFAM" id="SSF81383">
    <property type="entry name" value="F-box domain"/>
    <property type="match status" value="1"/>
</dbReference>
<dbReference type="SUPFAM" id="SSF52047">
    <property type="entry name" value="RNI-like"/>
    <property type="match status" value="1"/>
</dbReference>
<dbReference type="PROSITE" id="PS50181">
    <property type="entry name" value="FBOX"/>
    <property type="match status" value="1"/>
</dbReference>
<organism>
    <name type="scientific">Arabidopsis thaliana</name>
    <name type="common">Mouse-ear cress</name>
    <dbReference type="NCBI Taxonomy" id="3702"/>
    <lineage>
        <taxon>Eukaryota</taxon>
        <taxon>Viridiplantae</taxon>
        <taxon>Streptophyta</taxon>
        <taxon>Embryophyta</taxon>
        <taxon>Tracheophyta</taxon>
        <taxon>Spermatophyta</taxon>
        <taxon>Magnoliopsida</taxon>
        <taxon>eudicotyledons</taxon>
        <taxon>Gunneridae</taxon>
        <taxon>Pentapetalae</taxon>
        <taxon>rosids</taxon>
        <taxon>malvids</taxon>
        <taxon>Brassicales</taxon>
        <taxon>Brassicaceae</taxon>
        <taxon>Camelineae</taxon>
        <taxon>Arabidopsis</taxon>
    </lineage>
</organism>
<keyword id="KW-0433">Leucine-rich repeat</keyword>
<keyword id="KW-1185">Reference proteome</keyword>
<keyword id="KW-0677">Repeat</keyword>
<reference key="1">
    <citation type="journal article" date="2000" name="Nature">
        <title>Sequence and analysis of chromosome 1 of the plant Arabidopsis thaliana.</title>
        <authorList>
            <person name="Theologis A."/>
            <person name="Ecker J.R."/>
            <person name="Palm C.J."/>
            <person name="Federspiel N.A."/>
            <person name="Kaul S."/>
            <person name="White O."/>
            <person name="Alonso J."/>
            <person name="Altafi H."/>
            <person name="Araujo R."/>
            <person name="Bowman C.L."/>
            <person name="Brooks S.Y."/>
            <person name="Buehler E."/>
            <person name="Chan A."/>
            <person name="Chao Q."/>
            <person name="Chen H."/>
            <person name="Cheuk R.F."/>
            <person name="Chin C.W."/>
            <person name="Chung M.K."/>
            <person name="Conn L."/>
            <person name="Conway A.B."/>
            <person name="Conway A.R."/>
            <person name="Creasy T.H."/>
            <person name="Dewar K."/>
            <person name="Dunn P."/>
            <person name="Etgu P."/>
            <person name="Feldblyum T.V."/>
            <person name="Feng J.-D."/>
            <person name="Fong B."/>
            <person name="Fujii C.Y."/>
            <person name="Gill J.E."/>
            <person name="Goldsmith A.D."/>
            <person name="Haas B."/>
            <person name="Hansen N.F."/>
            <person name="Hughes B."/>
            <person name="Huizar L."/>
            <person name="Hunter J.L."/>
            <person name="Jenkins J."/>
            <person name="Johnson-Hopson C."/>
            <person name="Khan S."/>
            <person name="Khaykin E."/>
            <person name="Kim C.J."/>
            <person name="Koo H.L."/>
            <person name="Kremenetskaia I."/>
            <person name="Kurtz D.B."/>
            <person name="Kwan A."/>
            <person name="Lam B."/>
            <person name="Langin-Hooper S."/>
            <person name="Lee A."/>
            <person name="Lee J.M."/>
            <person name="Lenz C.A."/>
            <person name="Li J.H."/>
            <person name="Li Y.-P."/>
            <person name="Lin X."/>
            <person name="Liu S.X."/>
            <person name="Liu Z.A."/>
            <person name="Luros J.S."/>
            <person name="Maiti R."/>
            <person name="Marziali A."/>
            <person name="Militscher J."/>
            <person name="Miranda M."/>
            <person name="Nguyen M."/>
            <person name="Nierman W.C."/>
            <person name="Osborne B.I."/>
            <person name="Pai G."/>
            <person name="Peterson J."/>
            <person name="Pham P.K."/>
            <person name="Rizzo M."/>
            <person name="Rooney T."/>
            <person name="Rowley D."/>
            <person name="Sakano H."/>
            <person name="Salzberg S.L."/>
            <person name="Schwartz J.R."/>
            <person name="Shinn P."/>
            <person name="Southwick A.M."/>
            <person name="Sun H."/>
            <person name="Tallon L.J."/>
            <person name="Tambunga G."/>
            <person name="Toriumi M.J."/>
            <person name="Town C.D."/>
            <person name="Utterback T."/>
            <person name="Van Aken S."/>
            <person name="Vaysberg M."/>
            <person name="Vysotskaia V.S."/>
            <person name="Walker M."/>
            <person name="Wu D."/>
            <person name="Yu G."/>
            <person name="Fraser C.M."/>
            <person name="Venter J.C."/>
            <person name="Davis R.W."/>
        </authorList>
    </citation>
    <scope>NUCLEOTIDE SEQUENCE [LARGE SCALE GENOMIC DNA]</scope>
    <source>
        <strain>cv. Columbia</strain>
    </source>
</reference>
<reference key="2">
    <citation type="journal article" date="2017" name="Plant J.">
        <title>Araport11: a complete reannotation of the Arabidopsis thaliana reference genome.</title>
        <authorList>
            <person name="Cheng C.Y."/>
            <person name="Krishnakumar V."/>
            <person name="Chan A.P."/>
            <person name="Thibaud-Nissen F."/>
            <person name="Schobel S."/>
            <person name="Town C.D."/>
        </authorList>
    </citation>
    <scope>GENOME REANNOTATION</scope>
    <source>
        <strain>cv. Columbia</strain>
    </source>
</reference>
<evidence type="ECO:0000255" key="1">
    <source>
        <dbReference type="PROSITE-ProRule" id="PRU00080"/>
    </source>
</evidence>